<accession>Q5F9U0</accession>
<proteinExistence type="inferred from homology"/>
<name>SYFA_NEIG1</name>
<sequence>MENVNRIVAEGIAAVEAAQDFNALEQIKARYLGKTGELTGLLKTLFTGQMSPEERKTIGAHINECKNRFQTAFNAKRDALNEAKLQARLAAEALDITLPGRAQEGGFTSLHPVTLTLQRVVELFHGMGFEVADGPEIEDDFHNFQALNIPANHPARAMQDTFYVENGFTDVLRTHTSPIQIRYMLDKKEPPIRIIAPGRVYRVDSDATHSPMFHQAEGLWVEEGVTFAFTDLKAVFTDFIRRFFERDDLQVRFRPSFFPFTEPSAEIDIMGENGKWLEVGGCGMVHPNVFTLKNVNIDPEKYTGFAFGIGLDRFAMLRYNVNDLRLFFDNDLNFLKQFE</sequence>
<comment type="catalytic activity">
    <reaction evidence="1">
        <text>tRNA(Phe) + L-phenylalanine + ATP = L-phenylalanyl-tRNA(Phe) + AMP + diphosphate + H(+)</text>
        <dbReference type="Rhea" id="RHEA:19413"/>
        <dbReference type="Rhea" id="RHEA-COMP:9668"/>
        <dbReference type="Rhea" id="RHEA-COMP:9699"/>
        <dbReference type="ChEBI" id="CHEBI:15378"/>
        <dbReference type="ChEBI" id="CHEBI:30616"/>
        <dbReference type="ChEBI" id="CHEBI:33019"/>
        <dbReference type="ChEBI" id="CHEBI:58095"/>
        <dbReference type="ChEBI" id="CHEBI:78442"/>
        <dbReference type="ChEBI" id="CHEBI:78531"/>
        <dbReference type="ChEBI" id="CHEBI:456215"/>
        <dbReference type="EC" id="6.1.1.20"/>
    </reaction>
</comment>
<comment type="cofactor">
    <cofactor evidence="1">
        <name>Mg(2+)</name>
        <dbReference type="ChEBI" id="CHEBI:18420"/>
    </cofactor>
    <text evidence="1">Binds 2 magnesium ions per tetramer.</text>
</comment>
<comment type="subunit">
    <text evidence="1">Tetramer of two alpha and two beta subunits.</text>
</comment>
<comment type="subcellular location">
    <subcellularLocation>
        <location evidence="1">Cytoplasm</location>
    </subcellularLocation>
</comment>
<comment type="similarity">
    <text evidence="1">Belongs to the class-II aminoacyl-tRNA synthetase family. Phe-tRNA synthetase alpha subunit type 1 subfamily.</text>
</comment>
<organism>
    <name type="scientific">Neisseria gonorrhoeae (strain ATCC 700825 / FA 1090)</name>
    <dbReference type="NCBI Taxonomy" id="242231"/>
    <lineage>
        <taxon>Bacteria</taxon>
        <taxon>Pseudomonadati</taxon>
        <taxon>Pseudomonadota</taxon>
        <taxon>Betaproteobacteria</taxon>
        <taxon>Neisseriales</taxon>
        <taxon>Neisseriaceae</taxon>
        <taxon>Neisseria</taxon>
    </lineage>
</organism>
<keyword id="KW-0030">Aminoacyl-tRNA synthetase</keyword>
<keyword id="KW-0067">ATP-binding</keyword>
<keyword id="KW-0963">Cytoplasm</keyword>
<keyword id="KW-0436">Ligase</keyword>
<keyword id="KW-0460">Magnesium</keyword>
<keyword id="KW-0479">Metal-binding</keyword>
<keyword id="KW-0547">Nucleotide-binding</keyword>
<keyword id="KW-0648">Protein biosynthesis</keyword>
<keyword id="KW-1185">Reference proteome</keyword>
<reference key="1">
    <citation type="submission" date="2003-03" db="EMBL/GenBank/DDBJ databases">
        <title>The complete genome sequence of Neisseria gonorrhoeae.</title>
        <authorList>
            <person name="Lewis L.A."/>
            <person name="Gillaspy A.F."/>
            <person name="McLaughlin R.E."/>
            <person name="Gipson M."/>
            <person name="Ducey T.F."/>
            <person name="Ownbey T."/>
            <person name="Hartman K."/>
            <person name="Nydick C."/>
            <person name="Carson M.B."/>
            <person name="Vaughn J."/>
            <person name="Thomson C."/>
            <person name="Song L."/>
            <person name="Lin S."/>
            <person name="Yuan X."/>
            <person name="Najar F."/>
            <person name="Zhan M."/>
            <person name="Ren Q."/>
            <person name="Zhu H."/>
            <person name="Qi S."/>
            <person name="Kenton S.M."/>
            <person name="Lai H."/>
            <person name="White J.D."/>
            <person name="Clifton S."/>
            <person name="Roe B.A."/>
            <person name="Dyer D.W."/>
        </authorList>
    </citation>
    <scope>NUCLEOTIDE SEQUENCE [LARGE SCALE GENOMIC DNA]</scope>
    <source>
        <strain>ATCC 700825 / FA 1090</strain>
    </source>
</reference>
<gene>
    <name evidence="1" type="primary">pheS</name>
    <name type="ordered locus">NGO_0299</name>
</gene>
<dbReference type="EC" id="6.1.1.20" evidence="1"/>
<dbReference type="EMBL" id="AE004969">
    <property type="protein sequence ID" value="AAW89047.2"/>
    <property type="molecule type" value="Genomic_DNA"/>
</dbReference>
<dbReference type="RefSeq" id="YP_207459.2">
    <property type="nucleotide sequence ID" value="NC_002946.2"/>
</dbReference>
<dbReference type="SMR" id="Q5F9U0"/>
<dbReference type="STRING" id="242231.NGO_0299"/>
<dbReference type="KEGG" id="ngo:NGO_0299"/>
<dbReference type="PATRIC" id="fig|242231.10.peg.371"/>
<dbReference type="HOGENOM" id="CLU_025086_0_1_4"/>
<dbReference type="Proteomes" id="UP000000535">
    <property type="component" value="Chromosome"/>
</dbReference>
<dbReference type="GO" id="GO:0005737">
    <property type="term" value="C:cytoplasm"/>
    <property type="evidence" value="ECO:0007669"/>
    <property type="project" value="UniProtKB-SubCell"/>
</dbReference>
<dbReference type="GO" id="GO:0005524">
    <property type="term" value="F:ATP binding"/>
    <property type="evidence" value="ECO:0007669"/>
    <property type="project" value="UniProtKB-UniRule"/>
</dbReference>
<dbReference type="GO" id="GO:0000287">
    <property type="term" value="F:magnesium ion binding"/>
    <property type="evidence" value="ECO:0007669"/>
    <property type="project" value="UniProtKB-UniRule"/>
</dbReference>
<dbReference type="GO" id="GO:0004826">
    <property type="term" value="F:phenylalanine-tRNA ligase activity"/>
    <property type="evidence" value="ECO:0007669"/>
    <property type="project" value="UniProtKB-UniRule"/>
</dbReference>
<dbReference type="GO" id="GO:0000049">
    <property type="term" value="F:tRNA binding"/>
    <property type="evidence" value="ECO:0007669"/>
    <property type="project" value="InterPro"/>
</dbReference>
<dbReference type="GO" id="GO:0006432">
    <property type="term" value="P:phenylalanyl-tRNA aminoacylation"/>
    <property type="evidence" value="ECO:0007669"/>
    <property type="project" value="UniProtKB-UniRule"/>
</dbReference>
<dbReference type="CDD" id="cd00496">
    <property type="entry name" value="PheRS_alpha_core"/>
    <property type="match status" value="1"/>
</dbReference>
<dbReference type="FunFam" id="3.30.930.10:FF:000003">
    <property type="entry name" value="Phenylalanine--tRNA ligase alpha subunit"/>
    <property type="match status" value="1"/>
</dbReference>
<dbReference type="Gene3D" id="3.30.930.10">
    <property type="entry name" value="Bira Bifunctional Protein, Domain 2"/>
    <property type="match status" value="1"/>
</dbReference>
<dbReference type="HAMAP" id="MF_00281">
    <property type="entry name" value="Phe_tRNA_synth_alpha1"/>
    <property type="match status" value="1"/>
</dbReference>
<dbReference type="InterPro" id="IPR006195">
    <property type="entry name" value="aa-tRNA-synth_II"/>
</dbReference>
<dbReference type="InterPro" id="IPR045864">
    <property type="entry name" value="aa-tRNA-synth_II/BPL/LPL"/>
</dbReference>
<dbReference type="InterPro" id="IPR004529">
    <property type="entry name" value="Phe-tRNA-synth_IIc_asu"/>
</dbReference>
<dbReference type="InterPro" id="IPR004188">
    <property type="entry name" value="Phe-tRNA_ligase_II_N"/>
</dbReference>
<dbReference type="InterPro" id="IPR022911">
    <property type="entry name" value="Phe_tRNA_ligase_alpha1_bac"/>
</dbReference>
<dbReference type="InterPro" id="IPR002319">
    <property type="entry name" value="Phenylalanyl-tRNA_Synthase"/>
</dbReference>
<dbReference type="InterPro" id="IPR010978">
    <property type="entry name" value="tRNA-bd_arm"/>
</dbReference>
<dbReference type="NCBIfam" id="TIGR00468">
    <property type="entry name" value="pheS"/>
    <property type="match status" value="1"/>
</dbReference>
<dbReference type="PANTHER" id="PTHR11538:SF41">
    <property type="entry name" value="PHENYLALANINE--TRNA LIGASE, MITOCHONDRIAL"/>
    <property type="match status" value="1"/>
</dbReference>
<dbReference type="PANTHER" id="PTHR11538">
    <property type="entry name" value="PHENYLALANYL-TRNA SYNTHETASE"/>
    <property type="match status" value="1"/>
</dbReference>
<dbReference type="Pfam" id="PF02912">
    <property type="entry name" value="Phe_tRNA-synt_N"/>
    <property type="match status" value="1"/>
</dbReference>
<dbReference type="Pfam" id="PF01409">
    <property type="entry name" value="tRNA-synt_2d"/>
    <property type="match status" value="1"/>
</dbReference>
<dbReference type="SUPFAM" id="SSF55681">
    <property type="entry name" value="Class II aaRS and biotin synthetases"/>
    <property type="match status" value="1"/>
</dbReference>
<dbReference type="SUPFAM" id="SSF46589">
    <property type="entry name" value="tRNA-binding arm"/>
    <property type="match status" value="1"/>
</dbReference>
<dbReference type="PROSITE" id="PS50862">
    <property type="entry name" value="AA_TRNA_LIGASE_II"/>
    <property type="match status" value="1"/>
</dbReference>
<feature type="chain" id="PRO_0000231998" description="Phenylalanine--tRNA ligase alpha subunit">
    <location>
        <begin position="1"/>
        <end position="339"/>
    </location>
</feature>
<feature type="binding site" evidence="1">
    <location>
        <position position="262"/>
    </location>
    <ligand>
        <name>Mg(2+)</name>
        <dbReference type="ChEBI" id="CHEBI:18420"/>
        <note>shared with beta subunit</note>
    </ligand>
</feature>
<protein>
    <recommendedName>
        <fullName evidence="1">Phenylalanine--tRNA ligase alpha subunit</fullName>
        <ecNumber evidence="1">6.1.1.20</ecNumber>
    </recommendedName>
    <alternativeName>
        <fullName evidence="1">Phenylalanyl-tRNA synthetase alpha subunit</fullName>
        <shortName evidence="1">PheRS</shortName>
    </alternativeName>
</protein>
<evidence type="ECO:0000255" key="1">
    <source>
        <dbReference type="HAMAP-Rule" id="MF_00281"/>
    </source>
</evidence>